<gene>
    <name evidence="1" type="primary">ihfA</name>
    <name evidence="1" type="synonym">himA</name>
    <name type="ordered locus">Atu1180</name>
    <name type="ORF">AGR_C_2181</name>
</gene>
<evidence type="ECO:0000255" key="1">
    <source>
        <dbReference type="HAMAP-Rule" id="MF_00380"/>
    </source>
</evidence>
<feature type="chain" id="PRO_0000105000" description="Integration host factor subunit alpha">
    <location>
        <begin position="1"/>
        <end position="112"/>
    </location>
</feature>
<accession>Q8UG61</accession>
<sequence>MAGKTVTRADLAESVFRKVGLSRTESAELVETIIDEICNAITRGEVVKLSSFATFQIREKNERIGRNPKTGEEVPISPRRVMTFKASNVLKQRILKAHTARKAKQKGQKAGV</sequence>
<comment type="function">
    <text evidence="1">This protein is one of the two subunits of integration host factor, a specific DNA-binding protein that functions in genetic recombination as well as in transcriptional and translational control.</text>
</comment>
<comment type="subunit">
    <text evidence="1">Heterodimer of an alpha and a beta chain.</text>
</comment>
<comment type="similarity">
    <text evidence="1">Belongs to the bacterial histone-like protein family.</text>
</comment>
<keyword id="KW-0233">DNA recombination</keyword>
<keyword id="KW-0238">DNA-binding</keyword>
<keyword id="KW-1185">Reference proteome</keyword>
<keyword id="KW-0804">Transcription</keyword>
<keyword id="KW-0805">Transcription regulation</keyword>
<keyword id="KW-0810">Translation regulation</keyword>
<organism>
    <name type="scientific">Agrobacterium fabrum (strain C58 / ATCC 33970)</name>
    <name type="common">Agrobacterium tumefaciens (strain C58)</name>
    <dbReference type="NCBI Taxonomy" id="176299"/>
    <lineage>
        <taxon>Bacteria</taxon>
        <taxon>Pseudomonadati</taxon>
        <taxon>Pseudomonadota</taxon>
        <taxon>Alphaproteobacteria</taxon>
        <taxon>Hyphomicrobiales</taxon>
        <taxon>Rhizobiaceae</taxon>
        <taxon>Rhizobium/Agrobacterium group</taxon>
        <taxon>Agrobacterium</taxon>
        <taxon>Agrobacterium tumefaciens complex</taxon>
    </lineage>
</organism>
<name>IHFA_AGRFC</name>
<reference key="1">
    <citation type="journal article" date="2001" name="Science">
        <title>The genome of the natural genetic engineer Agrobacterium tumefaciens C58.</title>
        <authorList>
            <person name="Wood D.W."/>
            <person name="Setubal J.C."/>
            <person name="Kaul R."/>
            <person name="Monks D.E."/>
            <person name="Kitajima J.P."/>
            <person name="Okura V.K."/>
            <person name="Zhou Y."/>
            <person name="Chen L."/>
            <person name="Wood G.E."/>
            <person name="Almeida N.F. Jr."/>
            <person name="Woo L."/>
            <person name="Chen Y."/>
            <person name="Paulsen I.T."/>
            <person name="Eisen J.A."/>
            <person name="Karp P.D."/>
            <person name="Bovee D. Sr."/>
            <person name="Chapman P."/>
            <person name="Clendenning J."/>
            <person name="Deatherage G."/>
            <person name="Gillet W."/>
            <person name="Grant C."/>
            <person name="Kutyavin T."/>
            <person name="Levy R."/>
            <person name="Li M.-J."/>
            <person name="McClelland E."/>
            <person name="Palmieri A."/>
            <person name="Raymond C."/>
            <person name="Rouse G."/>
            <person name="Saenphimmachak C."/>
            <person name="Wu Z."/>
            <person name="Romero P."/>
            <person name="Gordon D."/>
            <person name="Zhang S."/>
            <person name="Yoo H."/>
            <person name="Tao Y."/>
            <person name="Biddle P."/>
            <person name="Jung M."/>
            <person name="Krespan W."/>
            <person name="Perry M."/>
            <person name="Gordon-Kamm B."/>
            <person name="Liao L."/>
            <person name="Kim S."/>
            <person name="Hendrick C."/>
            <person name="Zhao Z.-Y."/>
            <person name="Dolan M."/>
            <person name="Chumley F."/>
            <person name="Tingey S.V."/>
            <person name="Tomb J.-F."/>
            <person name="Gordon M.P."/>
            <person name="Olson M.V."/>
            <person name="Nester E.W."/>
        </authorList>
    </citation>
    <scope>NUCLEOTIDE SEQUENCE [LARGE SCALE GENOMIC DNA]</scope>
    <source>
        <strain>C58 / ATCC 33970</strain>
    </source>
</reference>
<reference key="2">
    <citation type="journal article" date="2001" name="Science">
        <title>Genome sequence of the plant pathogen and biotechnology agent Agrobacterium tumefaciens C58.</title>
        <authorList>
            <person name="Goodner B."/>
            <person name="Hinkle G."/>
            <person name="Gattung S."/>
            <person name="Miller N."/>
            <person name="Blanchard M."/>
            <person name="Qurollo B."/>
            <person name="Goldman B.S."/>
            <person name="Cao Y."/>
            <person name="Askenazi M."/>
            <person name="Halling C."/>
            <person name="Mullin L."/>
            <person name="Houmiel K."/>
            <person name="Gordon J."/>
            <person name="Vaudin M."/>
            <person name="Iartchouk O."/>
            <person name="Epp A."/>
            <person name="Liu F."/>
            <person name="Wollam C."/>
            <person name="Allinger M."/>
            <person name="Doughty D."/>
            <person name="Scott C."/>
            <person name="Lappas C."/>
            <person name="Markelz B."/>
            <person name="Flanagan C."/>
            <person name="Crowell C."/>
            <person name="Gurson J."/>
            <person name="Lomo C."/>
            <person name="Sear C."/>
            <person name="Strub G."/>
            <person name="Cielo C."/>
            <person name="Slater S."/>
        </authorList>
    </citation>
    <scope>NUCLEOTIDE SEQUENCE [LARGE SCALE GENOMIC DNA]</scope>
    <source>
        <strain>C58 / ATCC 33970</strain>
    </source>
</reference>
<dbReference type="EMBL" id="AE007869">
    <property type="protein sequence ID" value="AAK86984.2"/>
    <property type="molecule type" value="Genomic_DNA"/>
</dbReference>
<dbReference type="PIR" id="AB2722">
    <property type="entry name" value="AB2722"/>
</dbReference>
<dbReference type="PIR" id="G97503">
    <property type="entry name" value="G97503"/>
</dbReference>
<dbReference type="RefSeq" id="NP_354199.2">
    <property type="nucleotide sequence ID" value="NC_003062.2"/>
</dbReference>
<dbReference type="RefSeq" id="WP_006312805.1">
    <property type="nucleotide sequence ID" value="NC_003062.2"/>
</dbReference>
<dbReference type="SMR" id="Q8UG61"/>
<dbReference type="STRING" id="176299.Atu1180"/>
<dbReference type="EnsemblBacteria" id="AAK86984">
    <property type="protein sequence ID" value="AAK86984"/>
    <property type="gene ID" value="Atu1180"/>
</dbReference>
<dbReference type="GeneID" id="1133218"/>
<dbReference type="KEGG" id="atu:Atu1180"/>
<dbReference type="PATRIC" id="fig|176299.10.peg.1200"/>
<dbReference type="eggNOG" id="COG0776">
    <property type="taxonomic scope" value="Bacteria"/>
</dbReference>
<dbReference type="HOGENOM" id="CLU_105066_1_1_5"/>
<dbReference type="OrthoDB" id="9797747at2"/>
<dbReference type="PhylomeDB" id="Q8UG61"/>
<dbReference type="BioCyc" id="AGRO:ATU1180-MONOMER"/>
<dbReference type="Proteomes" id="UP000000813">
    <property type="component" value="Chromosome circular"/>
</dbReference>
<dbReference type="GO" id="GO:0005829">
    <property type="term" value="C:cytosol"/>
    <property type="evidence" value="ECO:0007669"/>
    <property type="project" value="TreeGrafter"/>
</dbReference>
<dbReference type="GO" id="GO:0003677">
    <property type="term" value="F:DNA binding"/>
    <property type="evidence" value="ECO:0007669"/>
    <property type="project" value="UniProtKB-UniRule"/>
</dbReference>
<dbReference type="GO" id="GO:0030527">
    <property type="term" value="F:structural constituent of chromatin"/>
    <property type="evidence" value="ECO:0007669"/>
    <property type="project" value="InterPro"/>
</dbReference>
<dbReference type="GO" id="GO:0006310">
    <property type="term" value="P:DNA recombination"/>
    <property type="evidence" value="ECO:0007669"/>
    <property type="project" value="UniProtKB-UniRule"/>
</dbReference>
<dbReference type="GO" id="GO:0009893">
    <property type="term" value="P:positive regulation of metabolic process"/>
    <property type="evidence" value="ECO:0007669"/>
    <property type="project" value="UniProtKB-ARBA"/>
</dbReference>
<dbReference type="GO" id="GO:0006355">
    <property type="term" value="P:regulation of DNA-templated transcription"/>
    <property type="evidence" value="ECO:0007669"/>
    <property type="project" value="UniProtKB-UniRule"/>
</dbReference>
<dbReference type="GO" id="GO:0006417">
    <property type="term" value="P:regulation of translation"/>
    <property type="evidence" value="ECO:0007669"/>
    <property type="project" value="UniProtKB-UniRule"/>
</dbReference>
<dbReference type="CDD" id="cd13835">
    <property type="entry name" value="IHF_A"/>
    <property type="match status" value="1"/>
</dbReference>
<dbReference type="Gene3D" id="4.10.520.10">
    <property type="entry name" value="IHF-like DNA-binding proteins"/>
    <property type="match status" value="1"/>
</dbReference>
<dbReference type="HAMAP" id="MF_00380">
    <property type="entry name" value="IHF_alpha"/>
    <property type="match status" value="1"/>
</dbReference>
<dbReference type="InterPro" id="IPR000119">
    <property type="entry name" value="Hist_DNA-bd"/>
</dbReference>
<dbReference type="InterPro" id="IPR020816">
    <property type="entry name" value="Histone-like_DNA-bd_CS"/>
</dbReference>
<dbReference type="InterPro" id="IPR010992">
    <property type="entry name" value="IHF-like_DNA-bd_dom_sf"/>
</dbReference>
<dbReference type="InterPro" id="IPR005684">
    <property type="entry name" value="IHF_alpha"/>
</dbReference>
<dbReference type="NCBIfam" id="TIGR00987">
    <property type="entry name" value="himA"/>
    <property type="match status" value="1"/>
</dbReference>
<dbReference type="NCBIfam" id="NF001401">
    <property type="entry name" value="PRK00285.1"/>
    <property type="match status" value="1"/>
</dbReference>
<dbReference type="PANTHER" id="PTHR33175">
    <property type="entry name" value="DNA-BINDING PROTEIN HU"/>
    <property type="match status" value="1"/>
</dbReference>
<dbReference type="PANTHER" id="PTHR33175:SF2">
    <property type="entry name" value="INTEGRATION HOST FACTOR SUBUNIT ALPHA"/>
    <property type="match status" value="1"/>
</dbReference>
<dbReference type="Pfam" id="PF00216">
    <property type="entry name" value="Bac_DNA_binding"/>
    <property type="match status" value="1"/>
</dbReference>
<dbReference type="PRINTS" id="PR01727">
    <property type="entry name" value="DNABINDINGHU"/>
</dbReference>
<dbReference type="SMART" id="SM00411">
    <property type="entry name" value="BHL"/>
    <property type="match status" value="1"/>
</dbReference>
<dbReference type="SUPFAM" id="SSF47729">
    <property type="entry name" value="IHF-like DNA-binding proteins"/>
    <property type="match status" value="1"/>
</dbReference>
<dbReference type="PROSITE" id="PS00045">
    <property type="entry name" value="HISTONE_LIKE"/>
    <property type="match status" value="1"/>
</dbReference>
<proteinExistence type="inferred from homology"/>
<protein>
    <recommendedName>
        <fullName evidence="1">Integration host factor subunit alpha</fullName>
        <shortName evidence="1">IHF-alpha</shortName>
    </recommendedName>
</protein>